<organism>
    <name type="scientific">Vibrio cholerae serotype O1 (strain ATCC 39315 / El Tor Inaba N16961)</name>
    <dbReference type="NCBI Taxonomy" id="243277"/>
    <lineage>
        <taxon>Bacteria</taxon>
        <taxon>Pseudomonadati</taxon>
        <taxon>Pseudomonadota</taxon>
        <taxon>Gammaproteobacteria</taxon>
        <taxon>Vibrionales</taxon>
        <taxon>Vibrionaceae</taxon>
        <taxon>Vibrio</taxon>
    </lineage>
</organism>
<proteinExistence type="inferred from homology"/>
<sequence>MNEIRTQVQFIDIDEDMAGQRIDNFLRNQLKNIPKSVVYRILRKGEVRVNKKRVKAEYKLEAGDVVRVPPVTVEVKENEPAPPSTKLSKVAELEHCIVYEDDHLLILNKPSGTAVHGGSGLHFGAIEALRALRPQARFLELVHRIDRDTSGILLVAKKRSALRHLQAQFREKTVQKYYYALVMGHWDAECKVVNAPLLKNEVNSIVRVNPNGKPSETRFRILEKFAEATLVQASPVTGRTHQIRVHTQYMGHPIAWDDRYGDRRFDAYTAQFGIERLFLHAANIQFVHPASEKKLEIHAPLEAHLEQALTKMRQA</sequence>
<evidence type="ECO:0000250" key="1"/>
<evidence type="ECO:0000255" key="2">
    <source>
        <dbReference type="PROSITE-ProRule" id="PRU00182"/>
    </source>
</evidence>
<evidence type="ECO:0000305" key="3"/>
<gene>
    <name type="primary">rluC</name>
    <name type="ordered locus">VC_2028</name>
</gene>
<feature type="chain" id="PRO_0000162679" description="Ribosomal large subunit pseudouridine synthase C">
    <location>
        <begin position="1"/>
        <end position="315"/>
    </location>
</feature>
<feature type="domain" description="S4 RNA-binding" evidence="2">
    <location>
        <begin position="20"/>
        <end position="94"/>
    </location>
</feature>
<feature type="active site" evidence="1">
    <location>
        <position position="146"/>
    </location>
</feature>
<name>RLUC_VIBCH</name>
<dbReference type="EC" id="5.4.99.24"/>
<dbReference type="EMBL" id="AE003852">
    <property type="protein sequence ID" value="AAF95176.1"/>
    <property type="molecule type" value="Genomic_DNA"/>
</dbReference>
<dbReference type="PIR" id="G82126">
    <property type="entry name" value="G82126"/>
</dbReference>
<dbReference type="RefSeq" id="NP_231662.1">
    <property type="nucleotide sequence ID" value="NC_002505.1"/>
</dbReference>
<dbReference type="RefSeq" id="WP_001002871.1">
    <property type="nucleotide sequence ID" value="NZ_LT906614.1"/>
</dbReference>
<dbReference type="SMR" id="Q9KQH0"/>
<dbReference type="STRING" id="243277.VC_2028"/>
<dbReference type="DNASU" id="2613407"/>
<dbReference type="EnsemblBacteria" id="AAF95176">
    <property type="protein sequence ID" value="AAF95176"/>
    <property type="gene ID" value="VC_2028"/>
</dbReference>
<dbReference type="KEGG" id="vch:VC_2028"/>
<dbReference type="PATRIC" id="fig|243277.26.peg.1938"/>
<dbReference type="eggNOG" id="COG0564">
    <property type="taxonomic scope" value="Bacteria"/>
</dbReference>
<dbReference type="HOGENOM" id="CLU_016902_1_1_6"/>
<dbReference type="Proteomes" id="UP000000584">
    <property type="component" value="Chromosome 1"/>
</dbReference>
<dbReference type="GO" id="GO:0160141">
    <property type="term" value="F:23S rRNA pseudouridine(955/2504/2580) synthase activity"/>
    <property type="evidence" value="ECO:0007669"/>
    <property type="project" value="UniProtKB-EC"/>
</dbReference>
<dbReference type="GO" id="GO:0009982">
    <property type="term" value="F:pseudouridine synthase activity"/>
    <property type="evidence" value="ECO:0000318"/>
    <property type="project" value="GO_Central"/>
</dbReference>
<dbReference type="GO" id="GO:0003723">
    <property type="term" value="F:RNA binding"/>
    <property type="evidence" value="ECO:0007669"/>
    <property type="project" value="UniProtKB-KW"/>
</dbReference>
<dbReference type="GO" id="GO:0000455">
    <property type="term" value="P:enzyme-directed rRNA pseudouridine synthesis"/>
    <property type="evidence" value="ECO:0000318"/>
    <property type="project" value="GO_Central"/>
</dbReference>
<dbReference type="CDD" id="cd02869">
    <property type="entry name" value="PseudoU_synth_RluA_like"/>
    <property type="match status" value="1"/>
</dbReference>
<dbReference type="CDD" id="cd00165">
    <property type="entry name" value="S4"/>
    <property type="match status" value="1"/>
</dbReference>
<dbReference type="FunFam" id="3.10.290.10:FF:000010">
    <property type="entry name" value="Pseudouridine synthase"/>
    <property type="match status" value="1"/>
</dbReference>
<dbReference type="Gene3D" id="3.30.2350.10">
    <property type="entry name" value="Pseudouridine synthase"/>
    <property type="match status" value="1"/>
</dbReference>
<dbReference type="Gene3D" id="3.10.290.10">
    <property type="entry name" value="RNA-binding S4 domain"/>
    <property type="match status" value="1"/>
</dbReference>
<dbReference type="InterPro" id="IPR020103">
    <property type="entry name" value="PsdUridine_synth_cat_dom_sf"/>
</dbReference>
<dbReference type="InterPro" id="IPR006224">
    <property type="entry name" value="PsdUridine_synth_RluA-like_CS"/>
</dbReference>
<dbReference type="InterPro" id="IPR006225">
    <property type="entry name" value="PsdUridine_synth_RluC/D"/>
</dbReference>
<dbReference type="InterPro" id="IPR006145">
    <property type="entry name" value="PsdUridine_synth_RsuA/RluA"/>
</dbReference>
<dbReference type="InterPro" id="IPR050188">
    <property type="entry name" value="RluA_PseudoU_synthase"/>
</dbReference>
<dbReference type="InterPro" id="IPR002942">
    <property type="entry name" value="S4_RNA-bd"/>
</dbReference>
<dbReference type="InterPro" id="IPR036986">
    <property type="entry name" value="S4_RNA-bd_sf"/>
</dbReference>
<dbReference type="NCBIfam" id="NF008249">
    <property type="entry name" value="PRK11025.1"/>
    <property type="match status" value="1"/>
</dbReference>
<dbReference type="NCBIfam" id="TIGR00005">
    <property type="entry name" value="rluA_subfam"/>
    <property type="match status" value="1"/>
</dbReference>
<dbReference type="PANTHER" id="PTHR21600">
    <property type="entry name" value="MITOCHONDRIAL RNA PSEUDOURIDINE SYNTHASE"/>
    <property type="match status" value="1"/>
</dbReference>
<dbReference type="PANTHER" id="PTHR21600:SF92">
    <property type="entry name" value="RIBOSOMAL LARGE SUBUNIT PSEUDOURIDINE SYNTHASE C"/>
    <property type="match status" value="1"/>
</dbReference>
<dbReference type="Pfam" id="PF00849">
    <property type="entry name" value="PseudoU_synth_2"/>
    <property type="match status" value="1"/>
</dbReference>
<dbReference type="Pfam" id="PF01479">
    <property type="entry name" value="S4"/>
    <property type="match status" value="1"/>
</dbReference>
<dbReference type="SMART" id="SM00363">
    <property type="entry name" value="S4"/>
    <property type="match status" value="1"/>
</dbReference>
<dbReference type="SUPFAM" id="SSF55174">
    <property type="entry name" value="Alpha-L RNA-binding motif"/>
    <property type="match status" value="1"/>
</dbReference>
<dbReference type="SUPFAM" id="SSF55120">
    <property type="entry name" value="Pseudouridine synthase"/>
    <property type="match status" value="1"/>
</dbReference>
<dbReference type="PROSITE" id="PS01129">
    <property type="entry name" value="PSI_RLU"/>
    <property type="match status" value="1"/>
</dbReference>
<dbReference type="PROSITE" id="PS50889">
    <property type="entry name" value="S4"/>
    <property type="match status" value="1"/>
</dbReference>
<accession>Q9KQH0</accession>
<keyword id="KW-0413">Isomerase</keyword>
<keyword id="KW-1185">Reference proteome</keyword>
<keyword id="KW-0694">RNA-binding</keyword>
<keyword id="KW-0698">rRNA processing</keyword>
<protein>
    <recommendedName>
        <fullName>Ribosomal large subunit pseudouridine synthase C</fullName>
        <ecNumber>5.4.99.24</ecNumber>
    </recommendedName>
    <alternativeName>
        <fullName>23S rRNA pseudouridine(955/2504/2580) synthase</fullName>
    </alternativeName>
    <alternativeName>
        <fullName>rRNA pseudouridylate synthase C</fullName>
    </alternativeName>
    <alternativeName>
        <fullName>rRNA-uridine isomerase C</fullName>
    </alternativeName>
</protein>
<comment type="function">
    <text evidence="1">Responsible for synthesis of pseudouridine from uracil at positions 955, 2504 and 2580 in 23S ribosomal RNA.</text>
</comment>
<comment type="catalytic activity">
    <reaction>
        <text>uridine(955/2504/2580) in 23S rRNA = pseudouridine(955/2504/2580) in 23S rRNA</text>
        <dbReference type="Rhea" id="RHEA:42528"/>
        <dbReference type="Rhea" id="RHEA-COMP:10099"/>
        <dbReference type="Rhea" id="RHEA-COMP:10100"/>
        <dbReference type="ChEBI" id="CHEBI:65314"/>
        <dbReference type="ChEBI" id="CHEBI:65315"/>
        <dbReference type="EC" id="5.4.99.24"/>
    </reaction>
</comment>
<comment type="similarity">
    <text evidence="3">Belongs to the pseudouridine synthase RluA family.</text>
</comment>
<reference key="1">
    <citation type="journal article" date="2000" name="Nature">
        <title>DNA sequence of both chromosomes of the cholera pathogen Vibrio cholerae.</title>
        <authorList>
            <person name="Heidelberg J.F."/>
            <person name="Eisen J.A."/>
            <person name="Nelson W.C."/>
            <person name="Clayton R.A."/>
            <person name="Gwinn M.L."/>
            <person name="Dodson R.J."/>
            <person name="Haft D.H."/>
            <person name="Hickey E.K."/>
            <person name="Peterson J.D."/>
            <person name="Umayam L.A."/>
            <person name="Gill S.R."/>
            <person name="Nelson K.E."/>
            <person name="Read T.D."/>
            <person name="Tettelin H."/>
            <person name="Richardson D.L."/>
            <person name="Ermolaeva M.D."/>
            <person name="Vamathevan J.J."/>
            <person name="Bass S."/>
            <person name="Qin H."/>
            <person name="Dragoi I."/>
            <person name="Sellers P."/>
            <person name="McDonald L.A."/>
            <person name="Utterback T.R."/>
            <person name="Fleischmann R.D."/>
            <person name="Nierman W.C."/>
            <person name="White O."/>
            <person name="Salzberg S.L."/>
            <person name="Smith H.O."/>
            <person name="Colwell R.R."/>
            <person name="Mekalanos J.J."/>
            <person name="Venter J.C."/>
            <person name="Fraser C.M."/>
        </authorList>
    </citation>
    <scope>NUCLEOTIDE SEQUENCE [LARGE SCALE GENOMIC DNA]</scope>
    <source>
        <strain>ATCC 39315 / El Tor Inaba N16961</strain>
    </source>
</reference>